<sequence length="319" mass="36215">MKPENKLPVLDLISAEMKTVVNTLQPDLPPWPATGTIAEQRQYYTLERRFWNVGAPEMATRAYRVPTKYGQVKTRIFYPQPDRPATLFYLHGGGFILGNLDTHDRIMRLLASYSQCTVIGIDYTLSPEARFPQAIEEIVAACCYFHQQAEDYQINMSRIGFAGDSAGAMLALASALWLRDKQIDCGKVAGVLLWYGLYGLRDSVTRRLLGGVWDGLTQQDLQMYEEAYLSNDADRESPYYCLFNNDLTREVPPCFIAGAEFDPLLDDSRLLYQTLAAHQQPCEFKLYPGTLHAFLHYSRMMKTADEALRDGAQFFTAQL</sequence>
<comment type="function">
    <text evidence="2">Displays esterase activity towards short chain fatty esters (acyl chain length of up to 8 carbons). Able to hydrolyze triacetylglycerol (triacetin) and tributyrylglycerol (tributyrin), but not trioleylglycerol (triolein) or cholesterol oleate. Negatively regulates MalT activity by antagonizing maltotriose binding. Inhibits MelA galactosidase activity.</text>
</comment>
<comment type="subunit">
    <text evidence="2">Homodimer. Interacts with MalT and MelA.</text>
</comment>
<comment type="subcellular location">
    <subcellularLocation>
        <location evidence="2">Cytoplasm</location>
    </subcellularLocation>
</comment>
<comment type="similarity">
    <text evidence="2">Belongs to the 'GDXG' lipolytic enzyme family.</text>
</comment>
<feature type="chain" id="PRO_0000239707" description="Acetyl esterase">
    <location>
        <begin position="1"/>
        <end position="319"/>
    </location>
</feature>
<feature type="short sequence motif" description="Involved in the stabilization of the negatively charged intermediate by the formation of the oxyanion hole" evidence="1">
    <location>
        <begin position="91"/>
        <end position="93"/>
    </location>
</feature>
<feature type="active site" evidence="2">
    <location>
        <position position="165"/>
    </location>
</feature>
<feature type="active site" evidence="2">
    <location>
        <position position="262"/>
    </location>
</feature>
<feature type="active site" evidence="2">
    <location>
        <position position="292"/>
    </location>
</feature>
<proteinExistence type="inferred from homology"/>
<evidence type="ECO:0000250" key="1">
    <source>
        <dbReference type="UniProtKB" id="Q5NUF3"/>
    </source>
</evidence>
<evidence type="ECO:0000255" key="2">
    <source>
        <dbReference type="HAMAP-Rule" id="MF_01958"/>
    </source>
</evidence>
<reference key="1">
    <citation type="journal article" date="2002" name="Proc. Natl. Acad. Sci. U.S.A.">
        <title>Extensive mosaic structure revealed by the complete genome sequence of uropathogenic Escherichia coli.</title>
        <authorList>
            <person name="Welch R.A."/>
            <person name="Burland V."/>
            <person name="Plunkett G. III"/>
            <person name="Redford P."/>
            <person name="Roesch P."/>
            <person name="Rasko D."/>
            <person name="Buckles E.L."/>
            <person name="Liou S.-R."/>
            <person name="Boutin A."/>
            <person name="Hackett J."/>
            <person name="Stroud D."/>
            <person name="Mayhew G.F."/>
            <person name="Rose D.J."/>
            <person name="Zhou S."/>
            <person name="Schwartz D.C."/>
            <person name="Perna N.T."/>
            <person name="Mobley H.L.T."/>
            <person name="Donnenberg M.S."/>
            <person name="Blattner F.R."/>
        </authorList>
    </citation>
    <scope>NUCLEOTIDE SEQUENCE [LARGE SCALE GENOMIC DNA]</scope>
    <source>
        <strain>CFT073 / ATCC 700928 / UPEC</strain>
    </source>
</reference>
<keyword id="KW-0963">Cytoplasm</keyword>
<keyword id="KW-0378">Hydrolase</keyword>
<keyword id="KW-1185">Reference proteome</keyword>
<keyword id="KW-0719">Serine esterase</keyword>
<gene>
    <name evidence="2" type="primary">aes</name>
    <name type="ordered locus">c0596</name>
</gene>
<name>AES_ECOL6</name>
<protein>
    <recommendedName>
        <fullName evidence="2">Acetyl esterase</fullName>
        <ecNumber evidence="2">3.1.1.-</ecNumber>
    </recommendedName>
</protein>
<accession>Q8FK82</accession>
<dbReference type="EC" id="3.1.1.-" evidence="2"/>
<dbReference type="EMBL" id="AE014075">
    <property type="protein sequence ID" value="AAN79074.1"/>
    <property type="molecule type" value="Genomic_DNA"/>
</dbReference>
<dbReference type="RefSeq" id="WP_000801819.1">
    <property type="nucleotide sequence ID" value="NZ_CP051263.1"/>
</dbReference>
<dbReference type="SMR" id="Q8FK82"/>
<dbReference type="STRING" id="199310.c0596"/>
<dbReference type="ESTHER" id="ecoli-Aes">
    <property type="family name" value="Acetyl_esterase"/>
</dbReference>
<dbReference type="MEROPS" id="S09.A47"/>
<dbReference type="KEGG" id="ecc:c0596"/>
<dbReference type="eggNOG" id="COG0657">
    <property type="taxonomic scope" value="Bacteria"/>
</dbReference>
<dbReference type="HOGENOM" id="CLU_012494_6_4_6"/>
<dbReference type="BioCyc" id="ECOL199310:C0596-MONOMER"/>
<dbReference type="Proteomes" id="UP000001410">
    <property type="component" value="Chromosome"/>
</dbReference>
<dbReference type="GO" id="GO:0005737">
    <property type="term" value="C:cytoplasm"/>
    <property type="evidence" value="ECO:0007669"/>
    <property type="project" value="UniProtKB-SubCell"/>
</dbReference>
<dbReference type="GO" id="GO:0052689">
    <property type="term" value="F:carboxylic ester hydrolase activity"/>
    <property type="evidence" value="ECO:0007669"/>
    <property type="project" value="UniProtKB-UniRule"/>
</dbReference>
<dbReference type="FunFam" id="3.40.50.1820:FF:000035">
    <property type="entry name" value="Acetyl esterase"/>
    <property type="match status" value="1"/>
</dbReference>
<dbReference type="Gene3D" id="3.40.50.1820">
    <property type="entry name" value="alpha/beta hydrolase"/>
    <property type="match status" value="1"/>
</dbReference>
<dbReference type="HAMAP" id="MF_01958">
    <property type="entry name" value="Acetyl_esterase"/>
    <property type="match status" value="1"/>
</dbReference>
<dbReference type="InterPro" id="IPR013094">
    <property type="entry name" value="AB_hydrolase_3"/>
</dbReference>
<dbReference type="InterPro" id="IPR029058">
    <property type="entry name" value="AB_hydrolase_fold"/>
</dbReference>
<dbReference type="InterPro" id="IPR023508">
    <property type="entry name" value="Acetyl_esterase"/>
</dbReference>
<dbReference type="InterPro" id="IPR050300">
    <property type="entry name" value="GDXG_lipolytic_enzyme"/>
</dbReference>
<dbReference type="InterPro" id="IPR002168">
    <property type="entry name" value="Lipase_GDXG_HIS_AS"/>
</dbReference>
<dbReference type="InterPro" id="IPR033140">
    <property type="entry name" value="Lipase_GDXG_put_SER_AS"/>
</dbReference>
<dbReference type="NCBIfam" id="NF007547">
    <property type="entry name" value="PRK10162.1"/>
    <property type="match status" value="1"/>
</dbReference>
<dbReference type="PANTHER" id="PTHR48081">
    <property type="entry name" value="AB HYDROLASE SUPERFAMILY PROTEIN C4A8.06C"/>
    <property type="match status" value="1"/>
</dbReference>
<dbReference type="PANTHER" id="PTHR48081:SF8">
    <property type="entry name" value="ALPHA_BETA HYDROLASE FOLD-3 DOMAIN-CONTAINING PROTEIN-RELATED"/>
    <property type="match status" value="1"/>
</dbReference>
<dbReference type="Pfam" id="PF07859">
    <property type="entry name" value="Abhydrolase_3"/>
    <property type="match status" value="1"/>
</dbReference>
<dbReference type="SUPFAM" id="SSF53474">
    <property type="entry name" value="alpha/beta-Hydrolases"/>
    <property type="match status" value="1"/>
</dbReference>
<dbReference type="PROSITE" id="PS01173">
    <property type="entry name" value="LIPASE_GDXG_HIS"/>
    <property type="match status" value="1"/>
</dbReference>
<dbReference type="PROSITE" id="PS01174">
    <property type="entry name" value="LIPASE_GDXG_SER"/>
    <property type="match status" value="1"/>
</dbReference>
<organism>
    <name type="scientific">Escherichia coli O6:H1 (strain CFT073 / ATCC 700928 / UPEC)</name>
    <dbReference type="NCBI Taxonomy" id="199310"/>
    <lineage>
        <taxon>Bacteria</taxon>
        <taxon>Pseudomonadati</taxon>
        <taxon>Pseudomonadota</taxon>
        <taxon>Gammaproteobacteria</taxon>
        <taxon>Enterobacterales</taxon>
        <taxon>Enterobacteriaceae</taxon>
        <taxon>Escherichia</taxon>
    </lineage>
</organism>